<feature type="chain" id="PRO_0000304038" description="Sororin-like protein 1">
    <location>
        <begin position="1"/>
        <end position="313"/>
    </location>
</feature>
<feature type="region of interest" description="Disordered" evidence="3">
    <location>
        <begin position="105"/>
        <end position="287"/>
    </location>
</feature>
<feature type="region of interest" description="C-terminal Sororin domain" evidence="7">
    <location>
        <begin position="288"/>
        <end position="310"/>
    </location>
</feature>
<feature type="short sequence motif" description="FGF motif" evidence="2">
    <location>
        <begin position="44"/>
        <end position="46"/>
    </location>
</feature>
<feature type="compositionally biased region" description="Polar residues" evidence="3">
    <location>
        <begin position="107"/>
        <end position="118"/>
    </location>
</feature>
<feature type="compositionally biased region" description="Pro residues" evidence="3">
    <location>
        <begin position="123"/>
        <end position="134"/>
    </location>
</feature>
<feature type="compositionally biased region" description="Low complexity" evidence="3">
    <location>
        <begin position="135"/>
        <end position="154"/>
    </location>
</feature>
<feature type="compositionally biased region" description="Polar residues" evidence="3">
    <location>
        <begin position="155"/>
        <end position="170"/>
    </location>
</feature>
<feature type="compositionally biased region" description="Basic residues" evidence="3">
    <location>
        <begin position="184"/>
        <end position="196"/>
    </location>
</feature>
<feature type="compositionally biased region" description="Basic and acidic residues" evidence="3">
    <location>
        <begin position="249"/>
        <end position="264"/>
    </location>
</feature>
<feature type="mutagenesis site" description="Lost ability to restore the growth defect of the eso1-G799D sor1 double mutant." evidence="6">
    <original>F</original>
    <variation>A</variation>
    <location>
        <position position="299"/>
    </location>
</feature>
<feature type="mutagenesis site" description="Lost ability to restore the growth defect of the eso1-G799D sor1 double mutant." evidence="6">
    <original>V</original>
    <variation>A</variation>
    <location>
        <position position="302"/>
    </location>
</feature>
<feature type="mutagenesis site" description="Reduced association with the cohesin subunit Psm3. Lost ability to restore the growth defect of the eso1-G799D sor1 double mutant." evidence="6">
    <original>D</original>
    <variation>A</variation>
    <location>
        <position position="303"/>
    </location>
</feature>
<feature type="mutagenesis site" description="Lost ability to restore the growth defect of the eso1-G799D sor1 double mutant." evidence="6">
    <original>Y</original>
    <variation>A</variation>
    <location>
        <position position="305"/>
    </location>
</feature>
<organism>
    <name type="scientific">Schizosaccharomyces pombe (strain 972 / ATCC 24843)</name>
    <name type="common">Fission yeast</name>
    <dbReference type="NCBI Taxonomy" id="284812"/>
    <lineage>
        <taxon>Eukaryota</taxon>
        <taxon>Fungi</taxon>
        <taxon>Dikarya</taxon>
        <taxon>Ascomycota</taxon>
        <taxon>Taphrinomycotina</taxon>
        <taxon>Schizosaccharomycetes</taxon>
        <taxon>Schizosaccharomycetales</taxon>
        <taxon>Schizosaccharomycetaceae</taxon>
        <taxon>Schizosaccharomyces</taxon>
    </lineage>
</organism>
<evidence type="ECO:0000250" key="1">
    <source>
        <dbReference type="UniProtKB" id="Q96FF9"/>
    </source>
</evidence>
<evidence type="ECO:0000255" key="2"/>
<evidence type="ECO:0000256" key="3">
    <source>
        <dbReference type="SAM" id="MobiDB-lite"/>
    </source>
</evidence>
<evidence type="ECO:0000269" key="4">
    <source>
    </source>
</evidence>
<evidence type="ECO:0000269" key="5">
    <source>
    </source>
</evidence>
<evidence type="ECO:0000269" key="6">
    <source>
    </source>
</evidence>
<evidence type="ECO:0000303" key="7">
    <source>
    </source>
</evidence>
<evidence type="ECO:0000305" key="8"/>
<sequence length="313" mass="34709">MDSDDSFVKTAHVIETSTPENKKLSHRFKSVEIVPPSSSNDDPFGFSSTKGIRLSSINSNDLVNTLSKGFNETSNMSYNRILPSSPPTLEIGEIDYNEALQIRSADENQQSVPTVSIASPSTPELPPSSSPLLPPNGSESSSPIPLSLLSTSSLQQRKITPSNLSNTSKPMDSKQLERLIPVPHGHHLTRLRKKRRRDDDIDLSGLYETKSSSPPAIHSDEDPSYSDSIARSPVKSAFNLRKRRKGVKEKKILKTYHSQDKDTASDNDNNTGSSDEENDNLKELTPGKKEYLKSIKKYFQDVDDYQLHVVNEG</sequence>
<protein>
    <recommendedName>
        <fullName evidence="7">Sororin-like protein 1</fullName>
    </recommendedName>
</protein>
<comment type="function">
    <text evidence="1 5 6">Regulator of sister chromatid cohesion in mitosis stabilizing cohesin complex association with chromatin (PubMed:23050226, PubMed:38830897). Antagonizes the action of wpl1 which stimulates cohesin dissociation from chromatin (By similarity). Cohesion ensures that chromosome partitioning is accurate in dividing cells and may play an important role in DNA repair (By similarity).</text>
</comment>
<comment type="subunit">
    <text evidence="6">Interacts with Pds5 and Psm3.</text>
</comment>
<comment type="subcellular location">
    <subcellularLocation>
        <location evidence="4 6">Nucleus</location>
    </subcellularLocation>
</comment>
<comment type="disruption phenotype">
    <text evidence="6">During metaphase, cohesion defect between sister centromeres leading to a slight increase of split sister centromeres; this phenotype is attenuated when wpl1 is also disrupted.</text>
</comment>
<comment type="miscellaneous">
    <text evidence="8">Named sororin after the Latin word 'soror', which means 'sister', because of its critical role in sister chromatid cohesion.</text>
</comment>
<comment type="similarity">
    <text evidence="8">Belongs to the sororin family.</text>
</comment>
<name>SOR1_SCHPO</name>
<dbReference type="EMBL" id="CU329670">
    <property type="protein sequence ID" value="CAB16404.1"/>
    <property type="molecule type" value="Genomic_DNA"/>
</dbReference>
<dbReference type="PIR" id="T39212">
    <property type="entry name" value="T39212"/>
</dbReference>
<dbReference type="RefSeq" id="NP_594578.1">
    <property type="nucleotide sequence ID" value="NM_001020007.2"/>
</dbReference>
<dbReference type="SMR" id="O14291"/>
<dbReference type="BioGRID" id="279712">
    <property type="interactions" value="11"/>
</dbReference>
<dbReference type="iPTMnet" id="O14291"/>
<dbReference type="PaxDb" id="4896-SPAC9E9.05.1"/>
<dbReference type="EnsemblFungi" id="SPAC9E9.05.1">
    <property type="protein sequence ID" value="SPAC9E9.05.1:pep"/>
    <property type="gene ID" value="SPAC9E9.05"/>
</dbReference>
<dbReference type="GeneID" id="2543287"/>
<dbReference type="KEGG" id="spo:2543287"/>
<dbReference type="PomBase" id="SPAC9E9.05">
    <property type="gene designation" value="sor1"/>
</dbReference>
<dbReference type="VEuPathDB" id="FungiDB:SPAC9E9.05"/>
<dbReference type="HOGENOM" id="CLU_900653_0_0_1"/>
<dbReference type="InParanoid" id="O14291"/>
<dbReference type="OMA" id="SHRFKSV"/>
<dbReference type="PRO" id="PR:O14291"/>
<dbReference type="Proteomes" id="UP000002485">
    <property type="component" value="Chromosome I"/>
</dbReference>
<dbReference type="GO" id="GO:0005634">
    <property type="term" value="C:nucleus"/>
    <property type="evidence" value="ECO:0000314"/>
    <property type="project" value="UniProtKB"/>
</dbReference>
<dbReference type="GO" id="GO:0007064">
    <property type="term" value="P:mitotic sister chromatid cohesion"/>
    <property type="evidence" value="ECO:0000269"/>
    <property type="project" value="PomBase"/>
</dbReference>
<dbReference type="GO" id="GO:0007063">
    <property type="term" value="P:regulation of sister chromatid cohesion"/>
    <property type="evidence" value="ECO:0000315"/>
    <property type="project" value="UniProtKB"/>
</dbReference>
<dbReference type="Pfam" id="PF25220">
    <property type="entry name" value="Sororin_C"/>
    <property type="match status" value="1"/>
</dbReference>
<gene>
    <name evidence="7" type="primary">sor1</name>
    <name type="ORF">SPAC9E9.05</name>
</gene>
<keyword id="KW-0131">Cell cycle</keyword>
<keyword id="KW-0132">Cell division</keyword>
<keyword id="KW-0498">Mitosis</keyword>
<keyword id="KW-0539">Nucleus</keyword>
<keyword id="KW-1185">Reference proteome</keyword>
<accession>O14291</accession>
<proteinExistence type="evidence at protein level"/>
<reference key="1">
    <citation type="journal article" date="2002" name="Nature">
        <title>The genome sequence of Schizosaccharomyces pombe.</title>
        <authorList>
            <person name="Wood V."/>
            <person name="Gwilliam R."/>
            <person name="Rajandream M.A."/>
            <person name="Lyne M.H."/>
            <person name="Lyne R."/>
            <person name="Stewart A."/>
            <person name="Sgouros J.G."/>
            <person name="Peat N."/>
            <person name="Hayles J."/>
            <person name="Baker S.G."/>
            <person name="Basham D."/>
            <person name="Bowman S."/>
            <person name="Brooks K."/>
            <person name="Brown D."/>
            <person name="Brown S."/>
            <person name="Chillingworth T."/>
            <person name="Churcher C.M."/>
            <person name="Collins M."/>
            <person name="Connor R."/>
            <person name="Cronin A."/>
            <person name="Davis P."/>
            <person name="Feltwell T."/>
            <person name="Fraser A."/>
            <person name="Gentles S."/>
            <person name="Goble A."/>
            <person name="Hamlin N."/>
            <person name="Harris D.E."/>
            <person name="Hidalgo J."/>
            <person name="Hodgson G."/>
            <person name="Holroyd S."/>
            <person name="Hornsby T."/>
            <person name="Howarth S."/>
            <person name="Huckle E.J."/>
            <person name="Hunt S."/>
            <person name="Jagels K."/>
            <person name="James K.D."/>
            <person name="Jones L."/>
            <person name="Jones M."/>
            <person name="Leather S."/>
            <person name="McDonald S."/>
            <person name="McLean J."/>
            <person name="Mooney P."/>
            <person name="Moule S."/>
            <person name="Mungall K.L."/>
            <person name="Murphy L.D."/>
            <person name="Niblett D."/>
            <person name="Odell C."/>
            <person name="Oliver K."/>
            <person name="O'Neil S."/>
            <person name="Pearson D."/>
            <person name="Quail M.A."/>
            <person name="Rabbinowitsch E."/>
            <person name="Rutherford K.M."/>
            <person name="Rutter S."/>
            <person name="Saunders D."/>
            <person name="Seeger K."/>
            <person name="Sharp S."/>
            <person name="Skelton J."/>
            <person name="Simmonds M.N."/>
            <person name="Squares R."/>
            <person name="Squares S."/>
            <person name="Stevens K."/>
            <person name="Taylor K."/>
            <person name="Taylor R.G."/>
            <person name="Tivey A."/>
            <person name="Walsh S.V."/>
            <person name="Warren T."/>
            <person name="Whitehead S."/>
            <person name="Woodward J.R."/>
            <person name="Volckaert G."/>
            <person name="Aert R."/>
            <person name="Robben J."/>
            <person name="Grymonprez B."/>
            <person name="Weltjens I."/>
            <person name="Vanstreels E."/>
            <person name="Rieger M."/>
            <person name="Schaefer M."/>
            <person name="Mueller-Auer S."/>
            <person name="Gabel C."/>
            <person name="Fuchs M."/>
            <person name="Duesterhoeft A."/>
            <person name="Fritzc C."/>
            <person name="Holzer E."/>
            <person name="Moestl D."/>
            <person name="Hilbert H."/>
            <person name="Borzym K."/>
            <person name="Langer I."/>
            <person name="Beck A."/>
            <person name="Lehrach H."/>
            <person name="Reinhardt R."/>
            <person name="Pohl T.M."/>
            <person name="Eger P."/>
            <person name="Zimmermann W."/>
            <person name="Wedler H."/>
            <person name="Wambutt R."/>
            <person name="Purnelle B."/>
            <person name="Goffeau A."/>
            <person name="Cadieu E."/>
            <person name="Dreano S."/>
            <person name="Gloux S."/>
            <person name="Lelaure V."/>
            <person name="Mottier S."/>
            <person name="Galibert F."/>
            <person name="Aves S.J."/>
            <person name="Xiang Z."/>
            <person name="Hunt C."/>
            <person name="Moore K."/>
            <person name="Hurst S.M."/>
            <person name="Lucas M."/>
            <person name="Rochet M."/>
            <person name="Gaillardin C."/>
            <person name="Tallada V.A."/>
            <person name="Garzon A."/>
            <person name="Thode G."/>
            <person name="Daga R.R."/>
            <person name="Cruzado L."/>
            <person name="Jimenez J."/>
            <person name="Sanchez M."/>
            <person name="del Rey F."/>
            <person name="Benito J."/>
            <person name="Dominguez A."/>
            <person name="Revuelta J.L."/>
            <person name="Moreno S."/>
            <person name="Armstrong J."/>
            <person name="Forsburg S.L."/>
            <person name="Cerutti L."/>
            <person name="Lowe T."/>
            <person name="McCombie W.R."/>
            <person name="Paulsen I."/>
            <person name="Potashkin J."/>
            <person name="Shpakovski G.V."/>
            <person name="Ussery D."/>
            <person name="Barrell B.G."/>
            <person name="Nurse P."/>
        </authorList>
    </citation>
    <scope>NUCLEOTIDE SEQUENCE [LARGE SCALE GENOMIC DNA]</scope>
    <source>
        <strain>972 / ATCC 24843</strain>
    </source>
</reference>
<reference key="2">
    <citation type="journal article" date="2006" name="Nat. Biotechnol.">
        <title>ORFeome cloning and global analysis of protein localization in the fission yeast Schizosaccharomyces pombe.</title>
        <authorList>
            <person name="Matsuyama A."/>
            <person name="Arai R."/>
            <person name="Yashiroda Y."/>
            <person name="Shirai A."/>
            <person name="Kamata A."/>
            <person name="Sekido S."/>
            <person name="Kobayashi Y."/>
            <person name="Hashimoto A."/>
            <person name="Hamamoto M."/>
            <person name="Hiraoka Y."/>
            <person name="Horinouchi S."/>
            <person name="Yoshida M."/>
        </authorList>
    </citation>
    <scope>SUBCELLULAR LOCATION [LARGE SCALE ANALYSIS]</scope>
</reference>
<reference key="3">
    <citation type="journal article" date="2012" name="G3 (Bethesda)">
        <title>A genetic screen to discover pathways affecting cohesin function in Schizosaccharomyces pombe identifies chromatin effectors.</title>
        <authorList>
            <person name="Chen Z."/>
            <person name="McCrosky S."/>
            <person name="Guo W."/>
            <person name="Li H."/>
            <person name="Gerton J.L."/>
        </authorList>
    </citation>
    <scope>FUNCTION</scope>
</reference>
<reference key="4">
    <citation type="journal article" date="2024" name="Nat. Commun.">
        <title>Sororin is an evolutionary conserved antagonist of WAPL.</title>
        <authorList>
            <person name="Prusen Mota I."/>
            <person name="Galova M."/>
            <person name="Schleiffer A."/>
            <person name="Nguyen T.T."/>
            <person name="Kovacikova I."/>
            <person name="Farias Saad C."/>
            <person name="Litos G."/>
            <person name="Nishiyama T."/>
            <person name="Gregan J."/>
            <person name="Peters J.M."/>
            <person name="Schloegelhofer P."/>
        </authorList>
    </citation>
    <scope>FUNCTION</scope>
    <scope>MUTAGENESIS OF PHE-299; VAL-302; ASP-303 AND TYR-305</scope>
    <scope>DISRUPTION PHENOTYPE</scope>
    <scope>SUBCELLULAR LOCATION</scope>
    <scope>INTERACTION WITH PDS5 AND PSM3</scope>
</reference>